<organism>
    <name type="scientific">Phyllomedusa burmeisteri</name>
    <name type="common">Brazilian common walking leaf frog</name>
    <dbReference type="NCBI Taxonomy" id="39413"/>
    <lineage>
        <taxon>Eukaryota</taxon>
        <taxon>Metazoa</taxon>
        <taxon>Chordata</taxon>
        <taxon>Craniata</taxon>
        <taxon>Vertebrata</taxon>
        <taxon>Euteleostomi</taxon>
        <taxon>Amphibia</taxon>
        <taxon>Batrachia</taxon>
        <taxon>Anura</taxon>
        <taxon>Neobatrachia</taxon>
        <taxon>Hyloidea</taxon>
        <taxon>Hylidae</taxon>
        <taxon>Phyllomedusinae</taxon>
        <taxon>Phyllomedusa</taxon>
    </lineage>
</organism>
<proteinExistence type="evidence at protein level"/>
<accession>P86283</accession>
<dbReference type="GO" id="GO:0005576">
    <property type="term" value="C:extracellular region"/>
    <property type="evidence" value="ECO:0007669"/>
    <property type="project" value="UniProtKB-SubCell"/>
</dbReference>
<dbReference type="GO" id="GO:0006952">
    <property type="term" value="P:defense response"/>
    <property type="evidence" value="ECO:0007669"/>
    <property type="project" value="UniProtKB-KW"/>
</dbReference>
<protein>
    <recommendedName>
        <fullName evidence="2">Phylloseptin Bu-2</fullName>
        <shortName evidence="3">PLS-Bu2</shortName>
    </recommendedName>
</protein>
<reference evidence="3" key="1">
    <citation type="submission" date="2009-04" db="UniProtKB">
        <title>Identification of peptides from Phyllomedusa burmesteri skin secretomics by nano LC MS/MS.</title>
        <authorList>
            <person name="Conceicao K."/>
            <person name="Klitzke C.F."/>
            <person name="Brito R.C."/>
            <person name="Andrade D.F."/>
            <person name="Junca F.A."/>
            <person name="Biondi I."/>
            <person name="Lopes-Ferreira M."/>
        </authorList>
    </citation>
    <scope>PROTEIN SEQUENCE</scope>
    <scope>SUBCELLULAR LOCATION</scope>
    <scope>TISSUE SPECIFICITY</scope>
    <scope>MASS SPECTROMETRY</scope>
    <scope>AMIDATION AT LYS-19</scope>
    <source>
        <tissue evidence="1">Parotoid gland secretion</tissue>
    </source>
</reference>
<feature type="peptide" id="PRO_0000378914" description="Phylloseptin Bu-2" evidence="1">
    <location>
        <begin position="1"/>
        <end position="19"/>
    </location>
</feature>
<feature type="modified residue" description="Lysine amide" evidence="1">
    <location>
        <position position="19"/>
    </location>
</feature>
<sequence>FLLSLPHLASGLASLVLSK</sequence>
<name>PLS2_PHYBU</name>
<comment type="subcellular location">
    <subcellularLocation>
        <location evidence="1">Secreted</location>
    </subcellularLocation>
</comment>
<comment type="tissue specificity">
    <text evidence="1">Expressed by the parotoid glands.</text>
</comment>
<comment type="mass spectrometry"/>
<comment type="similarity">
    <text evidence="1">Belongs to the frog skin active peptide (FSAP) family. Phylloseptin subfamily.</text>
</comment>
<evidence type="ECO:0000269" key="1">
    <source ref="1"/>
</evidence>
<evidence type="ECO:0000303" key="2">
    <source ref="1"/>
</evidence>
<evidence type="ECO:0000305" key="3"/>
<keyword id="KW-0027">Amidation</keyword>
<keyword id="KW-0878">Amphibian defense peptide</keyword>
<keyword id="KW-0903">Direct protein sequencing</keyword>
<keyword id="KW-0964">Secreted</keyword>